<accession>Q6BGU0</accession>
<comment type="function">
    <text evidence="1">Scaffold protein for the de novo synthesis of iron-sulfur (Fe-S) clusters within mitochondria, which is required for maturation of both mitochondrial and cytoplasmic [2Fe-2S] and [4Fe-4S] proteins. First, a [2Fe-2S] cluster is transiently assembled on the scaffold protein ISU1. In a second step, the cluster is released from ISU1, transferred to a glutaredoxin, followed by the formation of mitochondrial [2Fe-2S] proteins, the synthesis of [4Fe-4S] clusters and their target-specific insertion into the recipient apoproteins. Cluster assembly on ISU1 depends on the function of the cysteine desulfurase complex NFS1-ISD11, which serves as the sulfur donor for cluster synthesis, the iron-binding protein frataxin as the putative iron donor, and the electron transfer chain comprised of ferredoxin reductase and ferredoxin, which receive their electrons from NADH.</text>
</comment>
<comment type="cofactor">
    <cofactor evidence="2">
        <name>[2Fe-2S] cluster</name>
        <dbReference type="ChEBI" id="CHEBI:190135"/>
    </cofactor>
    <text evidence="2">Binds 1 [2Fe-2S] cluster per subunit.</text>
</comment>
<comment type="pathway">
    <text evidence="1">Cofactor biosynthesis; iron-sulfur cluster biosynthesis.</text>
</comment>
<comment type="subunit">
    <text evidence="1">Component of the core Fe-S cluster (ISC) assembly machinery.</text>
</comment>
<comment type="subcellular location">
    <subcellularLocation>
        <location evidence="1">Mitochondrion matrix</location>
    </subcellularLocation>
</comment>
<comment type="similarity">
    <text evidence="5">Belongs to the NifU family.</text>
</comment>
<proteinExistence type="inferred from homology"/>
<protein>
    <recommendedName>
        <fullName>Iron sulfur cluster assembly protein 1, mitochondrial</fullName>
    </recommendedName>
    <alternativeName>
        <fullName>Iron sulfur cluster scaffold protein 1</fullName>
    </alternativeName>
</protein>
<organism>
    <name type="scientific">Debaryomyces hansenii (strain ATCC 36239 / CBS 767 / BCRC 21394 / JCM 1990 / NBRC 0083 / IGC 2968)</name>
    <name type="common">Yeast</name>
    <name type="synonym">Torulaspora hansenii</name>
    <dbReference type="NCBI Taxonomy" id="284592"/>
    <lineage>
        <taxon>Eukaryota</taxon>
        <taxon>Fungi</taxon>
        <taxon>Dikarya</taxon>
        <taxon>Ascomycota</taxon>
        <taxon>Saccharomycotina</taxon>
        <taxon>Pichiomycetes</taxon>
        <taxon>Debaryomycetaceae</taxon>
        <taxon>Debaryomyces</taxon>
    </lineage>
</organism>
<evidence type="ECO:0000250" key="1">
    <source>
        <dbReference type="UniProtKB" id="Q03020"/>
    </source>
</evidence>
<evidence type="ECO:0000250" key="2">
    <source>
        <dbReference type="UniProtKB" id="Q9UTC6"/>
    </source>
</evidence>
<evidence type="ECO:0000255" key="3"/>
<evidence type="ECO:0000256" key="4">
    <source>
        <dbReference type="SAM" id="MobiDB-lite"/>
    </source>
</evidence>
<evidence type="ECO:0000305" key="5"/>
<feature type="transit peptide" description="Mitochondrion" evidence="3">
    <location>
        <begin position="1"/>
        <end status="unknown"/>
    </location>
</feature>
<feature type="chain" id="PRO_0000019696" description="Iron sulfur cluster assembly protein 1, mitochondrial">
    <location>
        <begin status="unknown"/>
        <end position="179"/>
    </location>
</feature>
<feature type="region of interest" description="Disordered" evidence="4">
    <location>
        <begin position="160"/>
        <end position="179"/>
    </location>
</feature>
<sequence>MISRSFLRLANPARRAMPAVKRVNMMPSMALPTKRLYHEKVLDHYSNPRNVGTLNKLDVDVGTGLVGAPACGDVMRLQIQVDDETGVIKDVKFKTFGCGSAIASSSYLTELVKGKTIEEAVKIKNTAIAKELSLPPVKLHCSMLAEDAIKSAVKDYRSKRSVKQPTLGPEAAQAETIAT</sequence>
<keyword id="KW-0001">2Fe-2S</keyword>
<keyword id="KW-0408">Iron</keyword>
<keyword id="KW-0411">Iron-sulfur</keyword>
<keyword id="KW-0479">Metal-binding</keyword>
<keyword id="KW-0496">Mitochondrion</keyword>
<keyword id="KW-1185">Reference proteome</keyword>
<keyword id="KW-0809">Transit peptide</keyword>
<dbReference type="EMBL" id="CR382139">
    <property type="protein sequence ID" value="CAG91094.1"/>
    <property type="molecule type" value="Genomic_DNA"/>
</dbReference>
<dbReference type="RefSeq" id="XP_462581.1">
    <property type="nucleotide sequence ID" value="XM_462581.1"/>
</dbReference>
<dbReference type="SMR" id="Q6BGU0"/>
<dbReference type="FunCoup" id="Q6BGU0">
    <property type="interactions" value="602"/>
</dbReference>
<dbReference type="STRING" id="284592.Q6BGU0"/>
<dbReference type="GeneID" id="2905540"/>
<dbReference type="KEGG" id="dha:DEHA2G23958g"/>
<dbReference type="VEuPathDB" id="FungiDB:DEHA2G23958g"/>
<dbReference type="eggNOG" id="KOG3361">
    <property type="taxonomic scope" value="Eukaryota"/>
</dbReference>
<dbReference type="HOGENOM" id="CLU_079283_1_2_1"/>
<dbReference type="InParanoid" id="Q6BGU0"/>
<dbReference type="OMA" id="YMTERVR"/>
<dbReference type="OrthoDB" id="1925777at2759"/>
<dbReference type="UniPathway" id="UPA00266"/>
<dbReference type="Proteomes" id="UP000000599">
    <property type="component" value="Chromosome G"/>
</dbReference>
<dbReference type="GO" id="GO:0005759">
    <property type="term" value="C:mitochondrial matrix"/>
    <property type="evidence" value="ECO:0007669"/>
    <property type="project" value="UniProtKB-SubCell"/>
</dbReference>
<dbReference type="GO" id="GO:0051537">
    <property type="term" value="F:2 iron, 2 sulfur cluster binding"/>
    <property type="evidence" value="ECO:0007669"/>
    <property type="project" value="UniProtKB-KW"/>
</dbReference>
<dbReference type="GO" id="GO:0005506">
    <property type="term" value="F:iron ion binding"/>
    <property type="evidence" value="ECO:0007669"/>
    <property type="project" value="InterPro"/>
</dbReference>
<dbReference type="GO" id="GO:0016226">
    <property type="term" value="P:iron-sulfur cluster assembly"/>
    <property type="evidence" value="ECO:0007669"/>
    <property type="project" value="InterPro"/>
</dbReference>
<dbReference type="CDD" id="cd06664">
    <property type="entry name" value="IscU_like"/>
    <property type="match status" value="1"/>
</dbReference>
<dbReference type="FunFam" id="3.90.1010.10:FF:000005">
    <property type="entry name" value="Iron-sulfur cluster assembly protein"/>
    <property type="match status" value="1"/>
</dbReference>
<dbReference type="Gene3D" id="3.90.1010.10">
    <property type="match status" value="1"/>
</dbReference>
<dbReference type="InterPro" id="IPR011339">
    <property type="entry name" value="ISCU"/>
</dbReference>
<dbReference type="InterPro" id="IPR002871">
    <property type="entry name" value="NIF_FeS_clus_asmbl_NifU_N"/>
</dbReference>
<dbReference type="NCBIfam" id="TIGR01999">
    <property type="entry name" value="iscU"/>
    <property type="match status" value="1"/>
</dbReference>
<dbReference type="PANTHER" id="PTHR10093">
    <property type="entry name" value="IRON-SULFUR CLUSTER ASSEMBLY ENZYME NIFU HOMOLOG"/>
    <property type="match status" value="1"/>
</dbReference>
<dbReference type="Pfam" id="PF01592">
    <property type="entry name" value="NifU_N"/>
    <property type="match status" value="1"/>
</dbReference>
<dbReference type="SUPFAM" id="SSF82649">
    <property type="entry name" value="SufE/NifU"/>
    <property type="match status" value="1"/>
</dbReference>
<gene>
    <name type="primary">ISU1</name>
    <name type="ordered locus">DEHA2G23958g</name>
</gene>
<reference key="1">
    <citation type="journal article" date="2004" name="Nature">
        <title>Genome evolution in yeasts.</title>
        <authorList>
            <person name="Dujon B."/>
            <person name="Sherman D."/>
            <person name="Fischer G."/>
            <person name="Durrens P."/>
            <person name="Casaregola S."/>
            <person name="Lafontaine I."/>
            <person name="de Montigny J."/>
            <person name="Marck C."/>
            <person name="Neuveglise C."/>
            <person name="Talla E."/>
            <person name="Goffard N."/>
            <person name="Frangeul L."/>
            <person name="Aigle M."/>
            <person name="Anthouard V."/>
            <person name="Babour A."/>
            <person name="Barbe V."/>
            <person name="Barnay S."/>
            <person name="Blanchin S."/>
            <person name="Beckerich J.-M."/>
            <person name="Beyne E."/>
            <person name="Bleykasten C."/>
            <person name="Boisrame A."/>
            <person name="Boyer J."/>
            <person name="Cattolico L."/>
            <person name="Confanioleri F."/>
            <person name="de Daruvar A."/>
            <person name="Despons L."/>
            <person name="Fabre E."/>
            <person name="Fairhead C."/>
            <person name="Ferry-Dumazet H."/>
            <person name="Groppi A."/>
            <person name="Hantraye F."/>
            <person name="Hennequin C."/>
            <person name="Jauniaux N."/>
            <person name="Joyet P."/>
            <person name="Kachouri R."/>
            <person name="Kerrest A."/>
            <person name="Koszul R."/>
            <person name="Lemaire M."/>
            <person name="Lesur I."/>
            <person name="Ma L."/>
            <person name="Muller H."/>
            <person name="Nicaud J.-M."/>
            <person name="Nikolski M."/>
            <person name="Oztas S."/>
            <person name="Ozier-Kalogeropoulos O."/>
            <person name="Pellenz S."/>
            <person name="Potier S."/>
            <person name="Richard G.-F."/>
            <person name="Straub M.-L."/>
            <person name="Suleau A."/>
            <person name="Swennen D."/>
            <person name="Tekaia F."/>
            <person name="Wesolowski-Louvel M."/>
            <person name="Westhof E."/>
            <person name="Wirth B."/>
            <person name="Zeniou-Meyer M."/>
            <person name="Zivanovic Y."/>
            <person name="Bolotin-Fukuhara M."/>
            <person name="Thierry A."/>
            <person name="Bouchier C."/>
            <person name="Caudron B."/>
            <person name="Scarpelli C."/>
            <person name="Gaillardin C."/>
            <person name="Weissenbach J."/>
            <person name="Wincker P."/>
            <person name="Souciet J.-L."/>
        </authorList>
    </citation>
    <scope>NUCLEOTIDE SEQUENCE [LARGE SCALE GENOMIC DNA]</scope>
    <source>
        <strain>ATCC 36239 / CBS 767 / BCRC 21394 / JCM 1990 / NBRC 0083 / IGC 2968</strain>
    </source>
</reference>
<name>ISU1_DEBHA</name>